<comment type="function">
    <molecule>Sterol regulatory element-binding protein 2</molecule>
    <text evidence="2">Precursor of the transcription factor form (Processed sterol regulatory element-binding protein 2), which is embedded in the endoplasmic reticulum membrane. Low sterol concentrations promote processing of this form, releasing the transcription factor form that translocates into the nucleus and activates transcription of genes involved in cholesterol biosynthesis.</text>
</comment>
<comment type="function">
    <molecule>Processed sterol regulatory element-binding protein 2</molecule>
    <text evidence="2">Key transcription factor that regulates expression of genes involved in cholesterol biosynthesis. Binds to the sterol regulatory element 1 (SRE-1) (5'-ATCACCCCAC-3'). Has dual sequence specificity binding to both an E-box motif (5'-ATCACGTGA-3') and to SRE-1 (5'-ATCACCCCAC-3'). Regulates transcription of genes related to cholesterol synthesis pathway.</text>
</comment>
<comment type="subunit">
    <molecule>Sterol regulatory element-binding protein 2</molecule>
    <text evidence="2">Forms a tight complex with scap, the SCAP-SREBP complex, in the endoplasmic reticulum membrane.</text>
</comment>
<comment type="subunit">
    <molecule>Processed sterol regulatory element-binding protein 2</molecule>
    <text evidence="3">Homodimer; efficient DNA binding of the soluble transcription factor fragment requires dimerization with another bHLH protein.</text>
</comment>
<comment type="subcellular location">
    <molecule>Sterol regulatory element-binding protein 2</molecule>
    <subcellularLocation>
        <location evidence="2">Endoplasmic reticulum membrane</location>
        <topology evidence="4">Multi-pass membrane protein</topology>
    </subcellularLocation>
    <subcellularLocation>
        <location evidence="2">Golgi apparatus membrane</location>
        <topology evidence="4">Multi-pass membrane protein</topology>
    </subcellularLocation>
    <subcellularLocation>
        <location evidence="2">Cytoplasmic vesicle</location>
        <location evidence="2">COPII-coated vesicle membrane</location>
        <topology evidence="4">Multi-pass membrane protein</topology>
    </subcellularLocation>
    <text evidence="2">At high sterol concentrations, the SCAP-SREBP is retained in the endoplasmic reticulum. Low sterol concentrations promote recruitment into COPII-coated vesicles and transport of the SCAP-SREBP to the Golgi, where it is processed.</text>
</comment>
<comment type="subcellular location">
    <molecule>Processed sterol regulatory element-binding protein 2</molecule>
    <subcellularLocation>
        <location evidence="2">Nucleus</location>
    </subcellularLocation>
</comment>
<comment type="PTM">
    <molecule>Sterol regulatory element-binding protein 2</molecule>
    <text evidence="2">Processed in the Golgi apparatus, releasing the protein from the membrane. At low cholesterol the SCAP-SREBP complex is recruited into COPII vesicles for export from the endoplasmic reticulum. In the Golgi, complex SREBPs are cleaved sequentially by site-1 (MBTPS1, S1P) and site-2 (MBTPS2, S2P) proteases. The first cleavage by site-1 protease occurs within the luminal loop, the second cleavage by site-2 protease occurs within the first transmembrane domain, releasing the transcription factor from the Golgi membrane.</text>
</comment>
<comment type="similarity">
    <text evidence="7">Belongs to the SREBP family.</text>
</comment>
<sequence length="1088" mass="119824">METLTELGDELTLGDIDEMLQFVSNQVGEFPDLFEEQLCQSYQGNNAMDTTLPKAYNQAAQQPYTTSAPQPQLLPVKAPPQATPQRTAPLLQPRPVVQTSPQPQLQQQTVMLTPNFSTAPQTRIIQQPLIYQNAATTSFQVLQPPVQSLMTTQQMQPVTIQQQVQTVQAQRVLTQAANGTIQTLTPATVQTVTPHVQQVPVLVQPQIIKTESLVLTAVKADGSPVMTAVQNPAITTLAGTLQTTALQVPTLMGSNGTILTTMPVMMGQEKMPIKQVPGSLKLAEVPKEGERRTTHNIIEKRYRSSINDKIMELKDLVMGTDAKMHKSGVLKKAIDYIKYLQQVNQKLRQENMALKLANQKNKYLKGIDLSSLVDTSIGMKIDEFNQNALMMSPPASDSGSPAVFSPYSVDSEPGSPLLDDEKVKDEPDSPTGLGMMDRSRMLLCTMTFLCLSFNPLTSLLHPESGQYSERAVQHGTGRTMLGVEMSGFYGSWFDWLIPTIILWLVNGVIVLSVFMKLLIHGEPVTRLHSRSSVKFWRHRKQADLDLAKGDFGAAALNLQTCLCVLGRSLPATRLDLACSLSWNIIRCSLQKISLVRWLLKHSPGYCKKAEFQDEATTSARDAALVYHKLHQLHLTGKLPSNWNCSGLNLALCAVNLAECAGNKISPTLLAEIHLTTAIQMKTSFPSRFRFLTAYFLGYAQNASSEETLPDPMRWLAHPLGKYFFINSNWALKSAAKDSLYTSTRNPANPVTQIHRAFCESLLEKAMYTMAKPETSKAASEEESCEFSRAQEYLKLLSGFADSVGNVASLPLGGSSPMSSADPICRWWYSVSSMAIGWLQGDDSVVKSHFAEVERIPKLLDSDNPLVKAVIHMCRAMQAAVLGKCDGQQNSFYHCEKASAFLWNSLNISSTGNTNLNKVVQLLICDLLLSLRTSLWQKQSSSPAAGDSIHAPTPALTGFQRDLSSLRRLSLTFKPAHCKLFLHEATVRLMADASPTRTHQLLQHSLQKCTALANKQGDLDSLPGQRERATAILLACRHLPLSFLSSPGQRAIMLAEAARTLEKVGDRRSYHDCQQMMVKLSGGTAMAAS</sequence>
<keyword id="KW-0010">Activator</keyword>
<keyword id="KW-0153">Cholesterol metabolism</keyword>
<keyword id="KW-0968">Cytoplasmic vesicle</keyword>
<keyword id="KW-0238">DNA-binding</keyword>
<keyword id="KW-0256">Endoplasmic reticulum</keyword>
<keyword id="KW-0333">Golgi apparatus</keyword>
<keyword id="KW-0443">Lipid metabolism</keyword>
<keyword id="KW-0472">Membrane</keyword>
<keyword id="KW-0539">Nucleus</keyword>
<keyword id="KW-1185">Reference proteome</keyword>
<keyword id="KW-0753">Steroid metabolism</keyword>
<keyword id="KW-1207">Sterol metabolism</keyword>
<keyword id="KW-0804">Transcription</keyword>
<keyword id="KW-0805">Transcription regulation</keyword>
<keyword id="KW-0812">Transmembrane</keyword>
<keyword id="KW-1133">Transmembrane helix</keyword>
<organism>
    <name type="scientific">Xenopus laevis</name>
    <name type="common">African clawed frog</name>
    <dbReference type="NCBI Taxonomy" id="8355"/>
    <lineage>
        <taxon>Eukaryota</taxon>
        <taxon>Metazoa</taxon>
        <taxon>Chordata</taxon>
        <taxon>Craniata</taxon>
        <taxon>Vertebrata</taxon>
        <taxon>Euteleostomi</taxon>
        <taxon>Amphibia</taxon>
        <taxon>Batrachia</taxon>
        <taxon>Anura</taxon>
        <taxon>Pipoidea</taxon>
        <taxon>Pipidae</taxon>
        <taxon>Xenopodinae</taxon>
        <taxon>Xenopus</taxon>
        <taxon>Xenopus</taxon>
    </lineage>
</organism>
<accession>Q6GQ26</accession>
<name>SRBP2_XENLA</name>
<dbReference type="EMBL" id="BC072922">
    <property type="protein sequence ID" value="AAH72922.1"/>
    <property type="molecule type" value="mRNA"/>
</dbReference>
<dbReference type="RefSeq" id="NP_001085554.2">
    <property type="nucleotide sequence ID" value="NM_001092085.1"/>
</dbReference>
<dbReference type="SMR" id="Q6GQ26"/>
<dbReference type="AGR" id="Xenbase:XB-GENE-1011364"/>
<dbReference type="Xenbase" id="XB-GENE-1011364">
    <property type="gene designation" value="srebf2.L"/>
</dbReference>
<dbReference type="Proteomes" id="UP000186698">
    <property type="component" value="Unplaced"/>
</dbReference>
<dbReference type="Bgee" id="443980">
    <property type="expression patterns" value="Expressed in blastula and 19 other cell types or tissues"/>
</dbReference>
<dbReference type="GO" id="GO:0005789">
    <property type="term" value="C:endoplasmic reticulum membrane"/>
    <property type="evidence" value="ECO:0007669"/>
    <property type="project" value="UniProtKB-SubCell"/>
</dbReference>
<dbReference type="GO" id="GO:0012507">
    <property type="term" value="C:ER to Golgi transport vesicle membrane"/>
    <property type="evidence" value="ECO:0007669"/>
    <property type="project" value="UniProtKB-SubCell"/>
</dbReference>
<dbReference type="GO" id="GO:0000139">
    <property type="term" value="C:Golgi membrane"/>
    <property type="evidence" value="ECO:0007669"/>
    <property type="project" value="UniProtKB-SubCell"/>
</dbReference>
<dbReference type="GO" id="GO:0005634">
    <property type="term" value="C:nucleus"/>
    <property type="evidence" value="ECO:0000318"/>
    <property type="project" value="GO_Central"/>
</dbReference>
<dbReference type="GO" id="GO:0000981">
    <property type="term" value="F:DNA-binding transcription factor activity, RNA polymerase II-specific"/>
    <property type="evidence" value="ECO:0000318"/>
    <property type="project" value="GO_Central"/>
</dbReference>
<dbReference type="GO" id="GO:0046983">
    <property type="term" value="F:protein dimerization activity"/>
    <property type="evidence" value="ECO:0007669"/>
    <property type="project" value="InterPro"/>
</dbReference>
<dbReference type="GO" id="GO:0000978">
    <property type="term" value="F:RNA polymerase II cis-regulatory region sequence-specific DNA binding"/>
    <property type="evidence" value="ECO:0000318"/>
    <property type="project" value="GO_Central"/>
</dbReference>
<dbReference type="GO" id="GO:0008203">
    <property type="term" value="P:cholesterol metabolic process"/>
    <property type="evidence" value="ECO:0007669"/>
    <property type="project" value="UniProtKB-KW"/>
</dbReference>
<dbReference type="GO" id="GO:0010886">
    <property type="term" value="P:positive regulation of cholesterol storage"/>
    <property type="evidence" value="ECO:0000318"/>
    <property type="project" value="GO_Central"/>
</dbReference>
<dbReference type="GO" id="GO:0045944">
    <property type="term" value="P:positive regulation of transcription by RNA polymerase II"/>
    <property type="evidence" value="ECO:0000318"/>
    <property type="project" value="GO_Central"/>
</dbReference>
<dbReference type="GO" id="GO:0008593">
    <property type="term" value="P:regulation of Notch signaling pathway"/>
    <property type="evidence" value="ECO:0000250"/>
    <property type="project" value="UniProtKB"/>
</dbReference>
<dbReference type="CDD" id="cd18922">
    <property type="entry name" value="bHLHzip_SREBP2"/>
    <property type="match status" value="1"/>
</dbReference>
<dbReference type="FunFam" id="4.10.280.10:FF:000016">
    <property type="entry name" value="Sterol regulatory element-binding transcription factor 1"/>
    <property type="match status" value="1"/>
</dbReference>
<dbReference type="Gene3D" id="4.10.280.10">
    <property type="entry name" value="Helix-loop-helix DNA-binding domain"/>
    <property type="match status" value="1"/>
</dbReference>
<dbReference type="InterPro" id="IPR011598">
    <property type="entry name" value="bHLH_dom"/>
</dbReference>
<dbReference type="InterPro" id="IPR036638">
    <property type="entry name" value="HLH_DNA-bd_sf"/>
</dbReference>
<dbReference type="PANTHER" id="PTHR46062">
    <property type="entry name" value="STEROL REGULATORY ELEMENT-BINDING PROTEIN"/>
    <property type="match status" value="1"/>
</dbReference>
<dbReference type="PANTHER" id="PTHR46062:SF3">
    <property type="entry name" value="STEROL REGULATORY ELEMENT-BINDING PROTEIN 2"/>
    <property type="match status" value="1"/>
</dbReference>
<dbReference type="Pfam" id="PF00010">
    <property type="entry name" value="HLH"/>
    <property type="match status" value="1"/>
</dbReference>
<dbReference type="SMART" id="SM00353">
    <property type="entry name" value="HLH"/>
    <property type="match status" value="1"/>
</dbReference>
<dbReference type="SUPFAM" id="SSF47459">
    <property type="entry name" value="HLH, helix-loop-helix DNA-binding domain"/>
    <property type="match status" value="1"/>
</dbReference>
<dbReference type="PROSITE" id="PS50888">
    <property type="entry name" value="BHLH"/>
    <property type="match status" value="1"/>
</dbReference>
<gene>
    <name evidence="2" type="primary">srebf2</name>
</gene>
<reference key="1">
    <citation type="submission" date="2004-06" db="EMBL/GenBank/DDBJ databases">
        <authorList>
            <consortium name="NIH - Xenopus Gene Collection (XGC) project"/>
        </authorList>
    </citation>
    <scope>NUCLEOTIDE SEQUENCE [LARGE SCALE MRNA]</scope>
    <source>
        <tissue evidence="8">Liver</tissue>
    </source>
</reference>
<feature type="chain" id="PRO_0000317065" description="Sterol regulatory element-binding protein 2">
    <location>
        <begin position="1"/>
        <end position="1088"/>
    </location>
</feature>
<feature type="chain" id="PRO_0000317066" description="Processed sterol regulatory element-binding protein 2" evidence="2">
    <location>
        <begin position="1"/>
        <end position="443"/>
    </location>
</feature>
<feature type="topological domain" description="Cytoplasmic" evidence="4">
    <location>
        <begin position="1"/>
        <end position="440"/>
    </location>
</feature>
<feature type="transmembrane region" description="Helical" evidence="4">
    <location>
        <begin position="441"/>
        <end position="461"/>
    </location>
</feature>
<feature type="topological domain" description="Lumenal" evidence="4">
    <location>
        <begin position="462"/>
        <end position="494"/>
    </location>
</feature>
<feature type="transmembrane region" description="Helical" evidence="4">
    <location>
        <begin position="495"/>
        <end position="515"/>
    </location>
</feature>
<feature type="topological domain" description="Cytoplasmic" evidence="4">
    <location>
        <begin position="516"/>
        <end position="1088"/>
    </location>
</feature>
<feature type="domain" description="bHLH" evidence="5">
    <location>
        <begin position="290"/>
        <end position="340"/>
    </location>
</feature>
<feature type="region of interest" description="Transcriptional activation (acidic)" evidence="1 2">
    <location>
        <begin position="1"/>
        <end position="38"/>
    </location>
</feature>
<feature type="region of interest" description="Disordered" evidence="6">
    <location>
        <begin position="59"/>
        <end position="87"/>
    </location>
</feature>
<feature type="region of interest" description="Leucine-zipper">
    <location>
        <begin position="340"/>
        <end position="361"/>
    </location>
</feature>
<feature type="region of interest" description="Disordered" evidence="6">
    <location>
        <begin position="392"/>
        <end position="431"/>
    </location>
</feature>
<feature type="compositionally biased region" description="Polar residues" evidence="6">
    <location>
        <begin position="59"/>
        <end position="70"/>
    </location>
</feature>
<feature type="site" description="Cleavage; by MBTPS2" evidence="2">
    <location>
        <begin position="443"/>
        <end position="444"/>
    </location>
</feature>
<feature type="site" description="Cleavage; by MBTPS1" evidence="2">
    <location>
        <begin position="481"/>
        <end position="482"/>
    </location>
</feature>
<proteinExistence type="evidence at transcript level"/>
<protein>
    <recommendedName>
        <fullName evidence="2">Sterol regulatory element-binding protein 2</fullName>
        <shortName evidence="2">SREBP-2</shortName>
    </recommendedName>
    <alternativeName>
        <fullName evidence="2">Sterol regulatory element-binding transcription factor 2</fullName>
    </alternativeName>
    <component>
        <recommendedName>
            <fullName evidence="7">Processed sterol regulatory element-binding protein 2</fullName>
        </recommendedName>
        <alternativeName>
            <fullName evidence="7">Transcription factor SREBF2</fullName>
        </alternativeName>
    </component>
</protein>
<evidence type="ECO:0000250" key="1">
    <source>
        <dbReference type="UniProtKB" id="P36956"/>
    </source>
</evidence>
<evidence type="ECO:0000250" key="2">
    <source>
        <dbReference type="UniProtKB" id="Q12772"/>
    </source>
</evidence>
<evidence type="ECO:0000250" key="3">
    <source>
        <dbReference type="UniProtKB" id="Q3U1N2"/>
    </source>
</evidence>
<evidence type="ECO:0000255" key="4"/>
<evidence type="ECO:0000255" key="5">
    <source>
        <dbReference type="PROSITE-ProRule" id="PRU00981"/>
    </source>
</evidence>
<evidence type="ECO:0000256" key="6">
    <source>
        <dbReference type="SAM" id="MobiDB-lite"/>
    </source>
</evidence>
<evidence type="ECO:0000305" key="7"/>
<evidence type="ECO:0000312" key="8">
    <source>
        <dbReference type="EMBL" id="AAH72922.1"/>
    </source>
</evidence>